<evidence type="ECO:0000255" key="1">
    <source>
        <dbReference type="HAMAP-Rule" id="MF_00008"/>
    </source>
</evidence>
<feature type="chain" id="PRO_1000000575" description="Thymidylate synthase">
    <location>
        <begin position="1"/>
        <end position="264"/>
    </location>
</feature>
<feature type="active site" description="Nucleophile" evidence="1">
    <location>
        <position position="146"/>
    </location>
</feature>
<feature type="binding site" description="in other chain" evidence="1">
    <location>
        <position position="21"/>
    </location>
    <ligand>
        <name>dUMP</name>
        <dbReference type="ChEBI" id="CHEBI:246422"/>
        <note>ligand shared between dimeric partners</note>
    </ligand>
</feature>
<feature type="binding site" evidence="1">
    <location>
        <position position="51"/>
    </location>
    <ligand>
        <name>(6R)-5,10-methylene-5,6,7,8-tetrahydrofolate</name>
        <dbReference type="ChEBI" id="CHEBI:15636"/>
    </ligand>
</feature>
<feature type="binding site" evidence="1">
    <location>
        <begin position="126"/>
        <end position="127"/>
    </location>
    <ligand>
        <name>dUMP</name>
        <dbReference type="ChEBI" id="CHEBI:246422"/>
        <note>ligand shared between dimeric partners</note>
    </ligand>
</feature>
<feature type="binding site" description="in other chain" evidence="1">
    <location>
        <begin position="166"/>
        <end position="169"/>
    </location>
    <ligand>
        <name>dUMP</name>
        <dbReference type="ChEBI" id="CHEBI:246422"/>
        <note>ligand shared between dimeric partners</note>
    </ligand>
</feature>
<feature type="binding site" evidence="1">
    <location>
        <position position="169"/>
    </location>
    <ligand>
        <name>(6R)-5,10-methylene-5,6,7,8-tetrahydrofolate</name>
        <dbReference type="ChEBI" id="CHEBI:15636"/>
    </ligand>
</feature>
<feature type="binding site" description="in other chain" evidence="1">
    <location>
        <position position="177"/>
    </location>
    <ligand>
        <name>dUMP</name>
        <dbReference type="ChEBI" id="CHEBI:246422"/>
        <note>ligand shared between dimeric partners</note>
    </ligand>
</feature>
<feature type="binding site" description="in other chain" evidence="1">
    <location>
        <begin position="207"/>
        <end position="209"/>
    </location>
    <ligand>
        <name>dUMP</name>
        <dbReference type="ChEBI" id="CHEBI:246422"/>
        <note>ligand shared between dimeric partners</note>
    </ligand>
</feature>
<feature type="binding site" evidence="1">
    <location>
        <position position="263"/>
    </location>
    <ligand>
        <name>(6R)-5,10-methylene-5,6,7,8-tetrahydrofolate</name>
        <dbReference type="ChEBI" id="CHEBI:15636"/>
    </ligand>
</feature>
<dbReference type="EC" id="2.1.1.45" evidence="1"/>
<dbReference type="EMBL" id="CP000560">
    <property type="protein sequence ID" value="ABS74359.1"/>
    <property type="molecule type" value="Genomic_DNA"/>
</dbReference>
<dbReference type="RefSeq" id="WP_003153622.1">
    <property type="nucleotide sequence ID" value="NC_009725.2"/>
</dbReference>
<dbReference type="SMR" id="A7Z5T3"/>
<dbReference type="GeneID" id="93081126"/>
<dbReference type="KEGG" id="bay:RBAM_019970"/>
<dbReference type="HOGENOM" id="CLU_021669_0_0_9"/>
<dbReference type="UniPathway" id="UPA00575"/>
<dbReference type="Proteomes" id="UP000001120">
    <property type="component" value="Chromosome"/>
</dbReference>
<dbReference type="GO" id="GO:0005829">
    <property type="term" value="C:cytosol"/>
    <property type="evidence" value="ECO:0007669"/>
    <property type="project" value="TreeGrafter"/>
</dbReference>
<dbReference type="GO" id="GO:0004799">
    <property type="term" value="F:thymidylate synthase activity"/>
    <property type="evidence" value="ECO:0007669"/>
    <property type="project" value="UniProtKB-UniRule"/>
</dbReference>
<dbReference type="GO" id="GO:0006231">
    <property type="term" value="P:dTMP biosynthetic process"/>
    <property type="evidence" value="ECO:0007669"/>
    <property type="project" value="UniProtKB-UniRule"/>
</dbReference>
<dbReference type="GO" id="GO:0006235">
    <property type="term" value="P:dTTP biosynthetic process"/>
    <property type="evidence" value="ECO:0007669"/>
    <property type="project" value="UniProtKB-UniRule"/>
</dbReference>
<dbReference type="GO" id="GO:0032259">
    <property type="term" value="P:methylation"/>
    <property type="evidence" value="ECO:0007669"/>
    <property type="project" value="UniProtKB-KW"/>
</dbReference>
<dbReference type="CDD" id="cd00351">
    <property type="entry name" value="TS_Pyrimidine_HMase"/>
    <property type="match status" value="1"/>
</dbReference>
<dbReference type="FunFam" id="3.30.572.10:FF:000001">
    <property type="entry name" value="Thymidylate synthase"/>
    <property type="match status" value="1"/>
</dbReference>
<dbReference type="Gene3D" id="3.30.572.10">
    <property type="entry name" value="Thymidylate synthase/dCMP hydroxymethylase domain"/>
    <property type="match status" value="1"/>
</dbReference>
<dbReference type="HAMAP" id="MF_00008">
    <property type="entry name" value="Thymidy_synth_bact"/>
    <property type="match status" value="1"/>
</dbReference>
<dbReference type="InterPro" id="IPR045097">
    <property type="entry name" value="Thymidate_synth/dCMP_Mease"/>
</dbReference>
<dbReference type="InterPro" id="IPR023451">
    <property type="entry name" value="Thymidate_synth/dCMP_Mease_dom"/>
</dbReference>
<dbReference type="InterPro" id="IPR036926">
    <property type="entry name" value="Thymidate_synth/dCMP_Mease_sf"/>
</dbReference>
<dbReference type="InterPro" id="IPR000398">
    <property type="entry name" value="Thymidylate_synthase"/>
</dbReference>
<dbReference type="InterPro" id="IPR020940">
    <property type="entry name" value="Thymidylate_synthase_AS"/>
</dbReference>
<dbReference type="NCBIfam" id="NF002497">
    <property type="entry name" value="PRK01827.1-3"/>
    <property type="match status" value="1"/>
</dbReference>
<dbReference type="NCBIfam" id="NF002499">
    <property type="entry name" value="PRK01827.1-5"/>
    <property type="match status" value="1"/>
</dbReference>
<dbReference type="NCBIfam" id="TIGR03284">
    <property type="entry name" value="thym_sym"/>
    <property type="match status" value="2"/>
</dbReference>
<dbReference type="PANTHER" id="PTHR11548:SF9">
    <property type="entry name" value="THYMIDYLATE SYNTHASE"/>
    <property type="match status" value="1"/>
</dbReference>
<dbReference type="PANTHER" id="PTHR11548">
    <property type="entry name" value="THYMIDYLATE SYNTHASE 1"/>
    <property type="match status" value="1"/>
</dbReference>
<dbReference type="Pfam" id="PF00303">
    <property type="entry name" value="Thymidylat_synt"/>
    <property type="match status" value="1"/>
</dbReference>
<dbReference type="PRINTS" id="PR00108">
    <property type="entry name" value="THYMDSNTHASE"/>
</dbReference>
<dbReference type="SUPFAM" id="SSF55831">
    <property type="entry name" value="Thymidylate synthase/dCMP hydroxymethylase"/>
    <property type="match status" value="1"/>
</dbReference>
<dbReference type="PROSITE" id="PS00091">
    <property type="entry name" value="THYMIDYLATE_SYNTHASE"/>
    <property type="match status" value="1"/>
</dbReference>
<accession>A7Z5T3</accession>
<reference key="1">
    <citation type="journal article" date="2007" name="Nat. Biotechnol.">
        <title>Comparative analysis of the complete genome sequence of the plant growth-promoting bacterium Bacillus amyloliquefaciens FZB42.</title>
        <authorList>
            <person name="Chen X.H."/>
            <person name="Koumoutsi A."/>
            <person name="Scholz R."/>
            <person name="Eisenreich A."/>
            <person name="Schneider K."/>
            <person name="Heinemeyer I."/>
            <person name="Morgenstern B."/>
            <person name="Voss B."/>
            <person name="Hess W.R."/>
            <person name="Reva O."/>
            <person name="Junge H."/>
            <person name="Voigt B."/>
            <person name="Jungblut P.R."/>
            <person name="Vater J."/>
            <person name="Suessmuth R."/>
            <person name="Liesegang H."/>
            <person name="Strittmatter A."/>
            <person name="Gottschalk G."/>
            <person name="Borriss R."/>
        </authorList>
    </citation>
    <scope>NUCLEOTIDE SEQUENCE [LARGE SCALE GENOMIC DNA]</scope>
    <source>
        <strain>DSM 23117 / BGSC 10A6 / LMG 26770 / FZB42</strain>
    </source>
</reference>
<gene>
    <name evidence="1" type="primary">thyA</name>
    <name type="ordered locus">RBAM_019970</name>
</gene>
<name>TYSY_BACVZ</name>
<protein>
    <recommendedName>
        <fullName evidence="1">Thymidylate synthase</fullName>
        <shortName evidence="1">TS</shortName>
        <shortName evidence="1">TSase</shortName>
        <ecNumber evidence="1">2.1.1.45</ecNumber>
    </recommendedName>
</protein>
<organism>
    <name type="scientific">Bacillus velezensis (strain DSM 23117 / BGSC 10A6 / LMG 26770 / FZB42)</name>
    <name type="common">Bacillus amyloliquefaciens subsp. plantarum</name>
    <dbReference type="NCBI Taxonomy" id="326423"/>
    <lineage>
        <taxon>Bacteria</taxon>
        <taxon>Bacillati</taxon>
        <taxon>Bacillota</taxon>
        <taxon>Bacilli</taxon>
        <taxon>Bacillales</taxon>
        <taxon>Bacillaceae</taxon>
        <taxon>Bacillus</taxon>
        <taxon>Bacillus amyloliquefaciens group</taxon>
    </lineage>
</organism>
<sequence>MKQYKDLCRHVLENGEKKGDRTGTGTISTFGYQMRFNLQEGFPMLTTKKLHFKSIAHELLWFLKGDTNVRYLQENGVRIWNEWADENGELGPVYGSQWRSWRGADGETIDQISRLIHDIKTNPNSRRLIVSAWNVGEIDHMALPPCHCLFQFYVADGKLSCQLYQRSADVFLGVPFNIASYALLTMMIAHVTGLEPGEFVHTFGDVHIYQNHVEQVNLQLTRDVRPLPKLRFARNVDSIFDFTFEDFIIEDYDPHPHIKGAVSV</sequence>
<comment type="function">
    <text evidence="1">Catalyzes the reductive methylation of 2'-deoxyuridine-5'-monophosphate (dUMP) to 2'-deoxythymidine-5'-monophosphate (dTMP) while utilizing 5,10-methylenetetrahydrofolate (mTHF) as the methyl donor and reductant in the reaction, yielding dihydrofolate (DHF) as a by-product. This enzymatic reaction provides an intracellular de novo source of dTMP, an essential precursor for DNA biosynthesis.</text>
</comment>
<comment type="catalytic activity">
    <reaction evidence="1">
        <text>dUMP + (6R)-5,10-methylene-5,6,7,8-tetrahydrofolate = 7,8-dihydrofolate + dTMP</text>
        <dbReference type="Rhea" id="RHEA:12104"/>
        <dbReference type="ChEBI" id="CHEBI:15636"/>
        <dbReference type="ChEBI" id="CHEBI:57451"/>
        <dbReference type="ChEBI" id="CHEBI:63528"/>
        <dbReference type="ChEBI" id="CHEBI:246422"/>
        <dbReference type="EC" id="2.1.1.45"/>
    </reaction>
</comment>
<comment type="pathway">
    <text evidence="1">Pyrimidine metabolism; dTTP biosynthesis.</text>
</comment>
<comment type="subunit">
    <text evidence="1">Homodimer.</text>
</comment>
<comment type="subcellular location">
    <subcellularLocation>
        <location evidence="1">Cytoplasm</location>
    </subcellularLocation>
</comment>
<comment type="similarity">
    <text evidence="1">Belongs to the thymidylate synthase family. Bacterial-type ThyA subfamily.</text>
</comment>
<proteinExistence type="inferred from homology"/>
<keyword id="KW-0963">Cytoplasm</keyword>
<keyword id="KW-0489">Methyltransferase</keyword>
<keyword id="KW-0545">Nucleotide biosynthesis</keyword>
<keyword id="KW-0808">Transferase</keyword>